<name>MURB_TREDE</name>
<protein>
    <recommendedName>
        <fullName evidence="1">UDP-N-acetylenolpyruvoylglucosamine reductase</fullName>
        <ecNumber evidence="1">1.3.1.98</ecNumber>
    </recommendedName>
    <alternativeName>
        <fullName evidence="1">UDP-N-acetylmuramate dehydrogenase</fullName>
    </alternativeName>
</protein>
<feature type="chain" id="PRO_0000224735" description="UDP-N-acetylenolpyruvoylglucosamine reductase">
    <location>
        <begin position="1"/>
        <end position="323"/>
    </location>
</feature>
<feature type="domain" description="FAD-binding PCMH-type" evidence="1">
    <location>
        <begin position="33"/>
        <end position="214"/>
    </location>
</feature>
<feature type="active site" description="Proton donor" evidence="1">
    <location>
        <position position="243"/>
    </location>
</feature>
<feature type="active site" evidence="1">
    <location>
        <position position="315"/>
    </location>
</feature>
<gene>
    <name evidence="1" type="primary">murB</name>
    <name type="ordered locus">TDE_0093</name>
</gene>
<evidence type="ECO:0000255" key="1">
    <source>
        <dbReference type="HAMAP-Rule" id="MF_00037"/>
    </source>
</evidence>
<sequence>MNNLFSILHNTPLFQEGTIEFYKPLKPLTSYKIGGPAEALFCPKDEDHLKEALIFLSKNKISASLIGGGTNILVSDKGFRGVLISLKNLNKIEIIGESENKVFVRAGAGVLTDKLTKWAVENSLSGLECFGGLPGSVGGAVFMNARCYDVSISDRLKSIKYILADGDKTEFAEYEYNPSDWDYKASPFQQNPVSTEITKNRKIVLSAVFTLTHGIKEEIAVKTEEKVQDRISKGHFKEPSAGSTFKNNRAFGLPSGKLIEDAGLKGLCEGGAQVAPWHGNFIINKHDASASDIKTLIEKVQKTVKDKTGFLLEPEVIFAGDWG</sequence>
<dbReference type="EC" id="1.3.1.98" evidence="1"/>
<dbReference type="EMBL" id="AE017226">
    <property type="protein sequence ID" value="AAS10591.1"/>
    <property type="molecule type" value="Genomic_DNA"/>
</dbReference>
<dbReference type="RefSeq" id="NP_970710.1">
    <property type="nucleotide sequence ID" value="NC_002967.9"/>
</dbReference>
<dbReference type="RefSeq" id="WP_002680945.1">
    <property type="nucleotide sequence ID" value="NC_002967.9"/>
</dbReference>
<dbReference type="SMR" id="Q73RJ5"/>
<dbReference type="STRING" id="243275.TDE_0093"/>
<dbReference type="PaxDb" id="243275-TDE_0093"/>
<dbReference type="GeneID" id="2741708"/>
<dbReference type="KEGG" id="tde:TDE_0093"/>
<dbReference type="PATRIC" id="fig|243275.7.peg.94"/>
<dbReference type="eggNOG" id="COG0812">
    <property type="taxonomic scope" value="Bacteria"/>
</dbReference>
<dbReference type="HOGENOM" id="CLU_035304_1_1_12"/>
<dbReference type="OrthoDB" id="9804753at2"/>
<dbReference type="UniPathway" id="UPA00219"/>
<dbReference type="Proteomes" id="UP000008212">
    <property type="component" value="Chromosome"/>
</dbReference>
<dbReference type="GO" id="GO:0005829">
    <property type="term" value="C:cytosol"/>
    <property type="evidence" value="ECO:0007669"/>
    <property type="project" value="TreeGrafter"/>
</dbReference>
<dbReference type="GO" id="GO:0071949">
    <property type="term" value="F:FAD binding"/>
    <property type="evidence" value="ECO:0007669"/>
    <property type="project" value="InterPro"/>
</dbReference>
<dbReference type="GO" id="GO:0008762">
    <property type="term" value="F:UDP-N-acetylmuramate dehydrogenase activity"/>
    <property type="evidence" value="ECO:0007669"/>
    <property type="project" value="UniProtKB-UniRule"/>
</dbReference>
<dbReference type="GO" id="GO:0051301">
    <property type="term" value="P:cell division"/>
    <property type="evidence" value="ECO:0007669"/>
    <property type="project" value="UniProtKB-KW"/>
</dbReference>
<dbReference type="GO" id="GO:0071555">
    <property type="term" value="P:cell wall organization"/>
    <property type="evidence" value="ECO:0007669"/>
    <property type="project" value="UniProtKB-KW"/>
</dbReference>
<dbReference type="GO" id="GO:0009252">
    <property type="term" value="P:peptidoglycan biosynthetic process"/>
    <property type="evidence" value="ECO:0007669"/>
    <property type="project" value="UniProtKB-UniRule"/>
</dbReference>
<dbReference type="GO" id="GO:0008360">
    <property type="term" value="P:regulation of cell shape"/>
    <property type="evidence" value="ECO:0007669"/>
    <property type="project" value="UniProtKB-KW"/>
</dbReference>
<dbReference type="Gene3D" id="3.30.465.10">
    <property type="match status" value="1"/>
</dbReference>
<dbReference type="Gene3D" id="3.90.78.10">
    <property type="entry name" value="UDP-N-acetylenolpyruvoylglucosamine reductase, C-terminal domain"/>
    <property type="match status" value="1"/>
</dbReference>
<dbReference type="Gene3D" id="3.30.43.10">
    <property type="entry name" value="Uridine Diphospho-n-acetylenolpyruvylglucosamine Reductase, domain 2"/>
    <property type="match status" value="1"/>
</dbReference>
<dbReference type="HAMAP" id="MF_00037">
    <property type="entry name" value="MurB"/>
    <property type="match status" value="1"/>
</dbReference>
<dbReference type="InterPro" id="IPR016166">
    <property type="entry name" value="FAD-bd_PCMH"/>
</dbReference>
<dbReference type="InterPro" id="IPR036318">
    <property type="entry name" value="FAD-bd_PCMH-like_sf"/>
</dbReference>
<dbReference type="InterPro" id="IPR016167">
    <property type="entry name" value="FAD-bd_PCMH_sub1"/>
</dbReference>
<dbReference type="InterPro" id="IPR016169">
    <property type="entry name" value="FAD-bd_PCMH_sub2"/>
</dbReference>
<dbReference type="InterPro" id="IPR003170">
    <property type="entry name" value="MurB"/>
</dbReference>
<dbReference type="InterPro" id="IPR011601">
    <property type="entry name" value="MurB_C"/>
</dbReference>
<dbReference type="InterPro" id="IPR036635">
    <property type="entry name" value="MurB_C_sf"/>
</dbReference>
<dbReference type="InterPro" id="IPR006094">
    <property type="entry name" value="Oxid_FAD_bind_N"/>
</dbReference>
<dbReference type="NCBIfam" id="TIGR00179">
    <property type="entry name" value="murB"/>
    <property type="match status" value="1"/>
</dbReference>
<dbReference type="NCBIfam" id="NF010480">
    <property type="entry name" value="PRK13905.1"/>
    <property type="match status" value="1"/>
</dbReference>
<dbReference type="PANTHER" id="PTHR21071">
    <property type="entry name" value="UDP-N-ACETYLENOLPYRUVOYLGLUCOSAMINE REDUCTASE"/>
    <property type="match status" value="1"/>
</dbReference>
<dbReference type="PANTHER" id="PTHR21071:SF4">
    <property type="entry name" value="UDP-N-ACETYLENOLPYRUVOYLGLUCOSAMINE REDUCTASE"/>
    <property type="match status" value="1"/>
</dbReference>
<dbReference type="Pfam" id="PF01565">
    <property type="entry name" value="FAD_binding_4"/>
    <property type="match status" value="1"/>
</dbReference>
<dbReference type="Pfam" id="PF02873">
    <property type="entry name" value="MurB_C"/>
    <property type="match status" value="1"/>
</dbReference>
<dbReference type="SUPFAM" id="SSF56176">
    <property type="entry name" value="FAD-binding/transporter-associated domain-like"/>
    <property type="match status" value="1"/>
</dbReference>
<dbReference type="SUPFAM" id="SSF56194">
    <property type="entry name" value="Uridine diphospho-N-Acetylenolpyruvylglucosamine reductase, MurB, C-terminal domain"/>
    <property type="match status" value="1"/>
</dbReference>
<dbReference type="PROSITE" id="PS51387">
    <property type="entry name" value="FAD_PCMH"/>
    <property type="match status" value="1"/>
</dbReference>
<reference key="1">
    <citation type="journal article" date="2004" name="Proc. Natl. Acad. Sci. U.S.A.">
        <title>Comparison of the genome of the oral pathogen Treponema denticola with other spirochete genomes.</title>
        <authorList>
            <person name="Seshadri R."/>
            <person name="Myers G.S.A."/>
            <person name="Tettelin H."/>
            <person name="Eisen J.A."/>
            <person name="Heidelberg J.F."/>
            <person name="Dodson R.J."/>
            <person name="Davidsen T.M."/>
            <person name="DeBoy R.T."/>
            <person name="Fouts D.E."/>
            <person name="Haft D.H."/>
            <person name="Selengut J."/>
            <person name="Ren Q."/>
            <person name="Brinkac L.M."/>
            <person name="Madupu R."/>
            <person name="Kolonay J.F."/>
            <person name="Durkin S.A."/>
            <person name="Daugherty S.C."/>
            <person name="Shetty J."/>
            <person name="Shvartsbeyn A."/>
            <person name="Gebregeorgis E."/>
            <person name="Geer K."/>
            <person name="Tsegaye G."/>
            <person name="Malek J.A."/>
            <person name="Ayodeji B."/>
            <person name="Shatsman S."/>
            <person name="McLeod M.P."/>
            <person name="Smajs D."/>
            <person name="Howell J.K."/>
            <person name="Pal S."/>
            <person name="Amin A."/>
            <person name="Vashisth P."/>
            <person name="McNeill T.Z."/>
            <person name="Xiang Q."/>
            <person name="Sodergren E."/>
            <person name="Baca E."/>
            <person name="Weinstock G.M."/>
            <person name="Norris S.J."/>
            <person name="Fraser C.M."/>
            <person name="Paulsen I.T."/>
        </authorList>
    </citation>
    <scope>NUCLEOTIDE SEQUENCE [LARGE SCALE GENOMIC DNA]</scope>
    <source>
        <strain>ATCC 35405 / DSM 14222 / CIP 103919 / JCM 8153 / KCTC 15104</strain>
    </source>
</reference>
<accession>Q73RJ5</accession>
<comment type="function">
    <text evidence="1">Cell wall formation.</text>
</comment>
<comment type="catalytic activity">
    <reaction evidence="1">
        <text>UDP-N-acetyl-alpha-D-muramate + NADP(+) = UDP-N-acetyl-3-O-(1-carboxyvinyl)-alpha-D-glucosamine + NADPH + H(+)</text>
        <dbReference type="Rhea" id="RHEA:12248"/>
        <dbReference type="ChEBI" id="CHEBI:15378"/>
        <dbReference type="ChEBI" id="CHEBI:57783"/>
        <dbReference type="ChEBI" id="CHEBI:58349"/>
        <dbReference type="ChEBI" id="CHEBI:68483"/>
        <dbReference type="ChEBI" id="CHEBI:70757"/>
        <dbReference type="EC" id="1.3.1.98"/>
    </reaction>
</comment>
<comment type="cofactor">
    <cofactor evidence="1">
        <name>FAD</name>
        <dbReference type="ChEBI" id="CHEBI:57692"/>
    </cofactor>
</comment>
<comment type="pathway">
    <text evidence="1">Cell wall biogenesis; peptidoglycan biosynthesis.</text>
</comment>
<comment type="subcellular location">
    <subcellularLocation>
        <location evidence="1">Cytoplasm</location>
    </subcellularLocation>
</comment>
<comment type="similarity">
    <text evidence="1">Belongs to the MurB family.</text>
</comment>
<keyword id="KW-0131">Cell cycle</keyword>
<keyword id="KW-0132">Cell division</keyword>
<keyword id="KW-0133">Cell shape</keyword>
<keyword id="KW-0961">Cell wall biogenesis/degradation</keyword>
<keyword id="KW-0963">Cytoplasm</keyword>
<keyword id="KW-0274">FAD</keyword>
<keyword id="KW-0285">Flavoprotein</keyword>
<keyword id="KW-0521">NADP</keyword>
<keyword id="KW-0560">Oxidoreductase</keyword>
<keyword id="KW-0573">Peptidoglycan synthesis</keyword>
<keyword id="KW-1185">Reference proteome</keyword>
<organism>
    <name type="scientific">Treponema denticola (strain ATCC 35405 / DSM 14222 / CIP 103919 / JCM 8153 / KCTC 15104)</name>
    <dbReference type="NCBI Taxonomy" id="243275"/>
    <lineage>
        <taxon>Bacteria</taxon>
        <taxon>Pseudomonadati</taxon>
        <taxon>Spirochaetota</taxon>
        <taxon>Spirochaetia</taxon>
        <taxon>Spirochaetales</taxon>
        <taxon>Treponemataceae</taxon>
        <taxon>Treponema</taxon>
    </lineage>
</organism>
<proteinExistence type="inferred from homology"/>